<protein>
    <recommendedName>
        <fullName evidence="1">Uridylate kinase</fullName>
        <shortName evidence="1">UK</shortName>
        <ecNumber evidence="1">2.7.4.22</ecNumber>
    </recommendedName>
    <alternativeName>
        <fullName evidence="1">Uridine monophosphate kinase</fullName>
        <shortName evidence="1">UMP kinase</shortName>
        <shortName evidence="1">UMPK</shortName>
    </alternativeName>
</protein>
<feature type="chain" id="PRO_0000323943" description="Uridylate kinase">
    <location>
        <begin position="1"/>
        <end position="250"/>
    </location>
</feature>
<feature type="binding site" evidence="1">
    <location>
        <begin position="19"/>
        <end position="22"/>
    </location>
    <ligand>
        <name>ATP</name>
        <dbReference type="ChEBI" id="CHEBI:30616"/>
    </ligand>
</feature>
<feature type="binding site" evidence="1">
    <location>
        <position position="61"/>
    </location>
    <ligand>
        <name>UMP</name>
        <dbReference type="ChEBI" id="CHEBI:57865"/>
    </ligand>
</feature>
<feature type="binding site" evidence="1">
    <location>
        <position position="62"/>
    </location>
    <ligand>
        <name>ATP</name>
        <dbReference type="ChEBI" id="CHEBI:30616"/>
    </ligand>
</feature>
<feature type="binding site" evidence="1">
    <location>
        <position position="66"/>
    </location>
    <ligand>
        <name>ATP</name>
        <dbReference type="ChEBI" id="CHEBI:30616"/>
    </ligand>
</feature>
<feature type="binding site" evidence="1">
    <location>
        <position position="81"/>
    </location>
    <ligand>
        <name>UMP</name>
        <dbReference type="ChEBI" id="CHEBI:57865"/>
    </ligand>
</feature>
<feature type="binding site" evidence="1">
    <location>
        <begin position="142"/>
        <end position="149"/>
    </location>
    <ligand>
        <name>UMP</name>
        <dbReference type="ChEBI" id="CHEBI:57865"/>
    </ligand>
</feature>
<feature type="binding site" evidence="1">
    <location>
        <position position="169"/>
    </location>
    <ligand>
        <name>ATP</name>
        <dbReference type="ChEBI" id="CHEBI:30616"/>
    </ligand>
</feature>
<feature type="binding site" evidence="1">
    <location>
        <position position="170"/>
    </location>
    <ligand>
        <name>ATP</name>
        <dbReference type="ChEBI" id="CHEBI:30616"/>
    </ligand>
</feature>
<feature type="binding site" evidence="1">
    <location>
        <position position="175"/>
    </location>
    <ligand>
        <name>ATP</name>
        <dbReference type="ChEBI" id="CHEBI:30616"/>
    </ligand>
</feature>
<feature type="binding site" evidence="1">
    <location>
        <position position="178"/>
    </location>
    <ligand>
        <name>ATP</name>
        <dbReference type="ChEBI" id="CHEBI:30616"/>
    </ligand>
</feature>
<organism>
    <name type="scientific">Rhodospirillum rubrum (strain ATCC 11170 / ATH 1.1.1 / DSM 467 / LMG 4362 / NCIMB 8255 / S1)</name>
    <dbReference type="NCBI Taxonomy" id="269796"/>
    <lineage>
        <taxon>Bacteria</taxon>
        <taxon>Pseudomonadati</taxon>
        <taxon>Pseudomonadota</taxon>
        <taxon>Alphaproteobacteria</taxon>
        <taxon>Rhodospirillales</taxon>
        <taxon>Rhodospirillaceae</taxon>
        <taxon>Rhodospirillum</taxon>
    </lineage>
</organism>
<reference key="1">
    <citation type="journal article" date="2011" name="Stand. Genomic Sci.">
        <title>Complete genome sequence of Rhodospirillum rubrum type strain (S1).</title>
        <authorList>
            <person name="Munk A.C."/>
            <person name="Copeland A."/>
            <person name="Lucas S."/>
            <person name="Lapidus A."/>
            <person name="Del Rio T.G."/>
            <person name="Barry K."/>
            <person name="Detter J.C."/>
            <person name="Hammon N."/>
            <person name="Israni S."/>
            <person name="Pitluck S."/>
            <person name="Brettin T."/>
            <person name="Bruce D."/>
            <person name="Han C."/>
            <person name="Tapia R."/>
            <person name="Gilna P."/>
            <person name="Schmutz J."/>
            <person name="Larimer F."/>
            <person name="Land M."/>
            <person name="Kyrpides N.C."/>
            <person name="Mavromatis K."/>
            <person name="Richardson P."/>
            <person name="Rohde M."/>
            <person name="Goeker M."/>
            <person name="Klenk H.P."/>
            <person name="Zhang Y."/>
            <person name="Roberts G.P."/>
            <person name="Reslewic S."/>
            <person name="Schwartz D.C."/>
        </authorList>
    </citation>
    <scope>NUCLEOTIDE SEQUENCE [LARGE SCALE GENOMIC DNA]</scope>
    <source>
        <strain>ATCC 11170 / ATH 1.1.1 / DSM 467 / LMG 4362 / NCIMB 8255 / S1</strain>
    </source>
</reference>
<comment type="function">
    <text evidence="1">Catalyzes the reversible phosphorylation of UMP to UDP.</text>
</comment>
<comment type="catalytic activity">
    <reaction evidence="1">
        <text>UMP + ATP = UDP + ADP</text>
        <dbReference type="Rhea" id="RHEA:24400"/>
        <dbReference type="ChEBI" id="CHEBI:30616"/>
        <dbReference type="ChEBI" id="CHEBI:57865"/>
        <dbReference type="ChEBI" id="CHEBI:58223"/>
        <dbReference type="ChEBI" id="CHEBI:456216"/>
        <dbReference type="EC" id="2.7.4.22"/>
    </reaction>
</comment>
<comment type="activity regulation">
    <text evidence="1">Inhibited by UTP.</text>
</comment>
<comment type="pathway">
    <text evidence="1">Pyrimidine metabolism; CTP biosynthesis via de novo pathway; UDP from UMP (UMPK route): step 1/1.</text>
</comment>
<comment type="subunit">
    <text evidence="1">Homohexamer.</text>
</comment>
<comment type="subcellular location">
    <subcellularLocation>
        <location evidence="1">Cytoplasm</location>
    </subcellularLocation>
</comment>
<comment type="similarity">
    <text evidence="1">Belongs to the UMP kinase family.</text>
</comment>
<name>PYRH_RHORT</name>
<gene>
    <name evidence="1" type="primary">pyrH</name>
    <name type="ordered locus">Rru_A1588</name>
</gene>
<sequence length="250" mass="27245">MSEDQPHANGAYYRRVLLKLSGEGLLGNKEFGLDLEMVDRVAGEVKAAHDRGIQVCLVIGGGNIFRGISTAAKGMDRTSADYMGMLATVMNALAVQNALEKRGVQTRVQSAIPMSMVCEPYIRRRAIRHMEKGRVVIFAAGTGNPFFTTDTAAALRAVEMNCDAILKATQVDGVYSADPNKVPDAVRFESLTFTDVLTRDLRVMDTSAIALARDNNIPIVVFSLHTPGALADVLDRRGRFTEILCDSHQE</sequence>
<accession>Q2RU07</accession>
<dbReference type="EC" id="2.7.4.22" evidence="1"/>
<dbReference type="EMBL" id="CP000230">
    <property type="protein sequence ID" value="ABC22388.1"/>
    <property type="molecule type" value="Genomic_DNA"/>
</dbReference>
<dbReference type="RefSeq" id="WP_011389463.1">
    <property type="nucleotide sequence ID" value="NC_007643.1"/>
</dbReference>
<dbReference type="RefSeq" id="YP_426675.1">
    <property type="nucleotide sequence ID" value="NC_007643.1"/>
</dbReference>
<dbReference type="SMR" id="Q2RU07"/>
<dbReference type="STRING" id="269796.Rru_A1588"/>
<dbReference type="EnsemblBacteria" id="ABC22388">
    <property type="protein sequence ID" value="ABC22388"/>
    <property type="gene ID" value="Rru_A1588"/>
</dbReference>
<dbReference type="KEGG" id="rru:Rru_A1588"/>
<dbReference type="PATRIC" id="fig|269796.9.peg.1662"/>
<dbReference type="eggNOG" id="COG0528">
    <property type="taxonomic scope" value="Bacteria"/>
</dbReference>
<dbReference type="HOGENOM" id="CLU_033861_0_0_5"/>
<dbReference type="PhylomeDB" id="Q2RU07"/>
<dbReference type="UniPathway" id="UPA00159">
    <property type="reaction ID" value="UER00275"/>
</dbReference>
<dbReference type="Proteomes" id="UP000001929">
    <property type="component" value="Chromosome"/>
</dbReference>
<dbReference type="GO" id="GO:0005829">
    <property type="term" value="C:cytosol"/>
    <property type="evidence" value="ECO:0007669"/>
    <property type="project" value="TreeGrafter"/>
</dbReference>
<dbReference type="GO" id="GO:0005524">
    <property type="term" value="F:ATP binding"/>
    <property type="evidence" value="ECO:0007669"/>
    <property type="project" value="UniProtKB-KW"/>
</dbReference>
<dbReference type="GO" id="GO:0033862">
    <property type="term" value="F:UMP kinase activity"/>
    <property type="evidence" value="ECO:0007669"/>
    <property type="project" value="UniProtKB-EC"/>
</dbReference>
<dbReference type="GO" id="GO:0044210">
    <property type="term" value="P:'de novo' CTP biosynthetic process"/>
    <property type="evidence" value="ECO:0007669"/>
    <property type="project" value="UniProtKB-UniRule"/>
</dbReference>
<dbReference type="GO" id="GO:0006225">
    <property type="term" value="P:UDP biosynthetic process"/>
    <property type="evidence" value="ECO:0007669"/>
    <property type="project" value="TreeGrafter"/>
</dbReference>
<dbReference type="CDD" id="cd04254">
    <property type="entry name" value="AAK_UMPK-PyrH-Ec"/>
    <property type="match status" value="1"/>
</dbReference>
<dbReference type="FunFam" id="3.40.1160.10:FF:000001">
    <property type="entry name" value="Uridylate kinase"/>
    <property type="match status" value="1"/>
</dbReference>
<dbReference type="Gene3D" id="3.40.1160.10">
    <property type="entry name" value="Acetylglutamate kinase-like"/>
    <property type="match status" value="1"/>
</dbReference>
<dbReference type="HAMAP" id="MF_01220_B">
    <property type="entry name" value="PyrH_B"/>
    <property type="match status" value="1"/>
</dbReference>
<dbReference type="InterPro" id="IPR036393">
    <property type="entry name" value="AceGlu_kinase-like_sf"/>
</dbReference>
<dbReference type="InterPro" id="IPR001048">
    <property type="entry name" value="Asp/Glu/Uridylate_kinase"/>
</dbReference>
<dbReference type="InterPro" id="IPR011817">
    <property type="entry name" value="Uridylate_kinase"/>
</dbReference>
<dbReference type="InterPro" id="IPR015963">
    <property type="entry name" value="Uridylate_kinase_bac"/>
</dbReference>
<dbReference type="NCBIfam" id="TIGR02075">
    <property type="entry name" value="pyrH_bact"/>
    <property type="match status" value="1"/>
</dbReference>
<dbReference type="PANTHER" id="PTHR42833">
    <property type="entry name" value="URIDYLATE KINASE"/>
    <property type="match status" value="1"/>
</dbReference>
<dbReference type="PANTHER" id="PTHR42833:SF4">
    <property type="entry name" value="URIDYLATE KINASE PUMPKIN, CHLOROPLASTIC"/>
    <property type="match status" value="1"/>
</dbReference>
<dbReference type="Pfam" id="PF00696">
    <property type="entry name" value="AA_kinase"/>
    <property type="match status" value="1"/>
</dbReference>
<dbReference type="PIRSF" id="PIRSF005650">
    <property type="entry name" value="Uridylate_kin"/>
    <property type="match status" value="1"/>
</dbReference>
<dbReference type="SUPFAM" id="SSF53633">
    <property type="entry name" value="Carbamate kinase-like"/>
    <property type="match status" value="1"/>
</dbReference>
<keyword id="KW-0067">ATP-binding</keyword>
<keyword id="KW-0963">Cytoplasm</keyword>
<keyword id="KW-0418">Kinase</keyword>
<keyword id="KW-0547">Nucleotide-binding</keyword>
<keyword id="KW-0665">Pyrimidine biosynthesis</keyword>
<keyword id="KW-1185">Reference proteome</keyword>
<keyword id="KW-0808">Transferase</keyword>
<evidence type="ECO:0000255" key="1">
    <source>
        <dbReference type="HAMAP-Rule" id="MF_01220"/>
    </source>
</evidence>
<proteinExistence type="inferred from homology"/>